<evidence type="ECO:0000250" key="1"/>
<evidence type="ECO:0000269" key="2">
    <source>
    </source>
</evidence>
<evidence type="ECO:0000305" key="3"/>
<protein>
    <recommendedName>
        <fullName>Alcohol dehydrogenase 1</fullName>
        <ecNumber>1.1.1.1</ecNumber>
    </recommendedName>
    <alternativeName>
        <fullName>Alcohol dehydrogenase, major</fullName>
    </alternativeName>
</protein>
<reference key="1">
    <citation type="journal article" date="1993" name="Eur. J. Biochem.">
        <title>Basic features of class-I alcohol dehydrogenase: variable and constant segments coordinated by inter-class and intra-class variability. Conclusions from characterization of the alligator enzyme.</title>
        <authorList>
            <person name="Persson B."/>
            <person name="Bergman T."/>
            <person name="Keung W.M."/>
            <person name="Waldenstroem U."/>
            <person name="Holmquist B."/>
            <person name="Vallee B.L."/>
            <person name="Joernvall H."/>
        </authorList>
    </citation>
    <scope>PROTEIN SEQUENCE</scope>
    <scope>ACETYLATION AT SER-1</scope>
    <source>
        <tissue>Liver</tissue>
    </source>
</reference>
<organism>
    <name type="scientific">Alligator mississippiensis</name>
    <name type="common">American alligator</name>
    <dbReference type="NCBI Taxonomy" id="8496"/>
    <lineage>
        <taxon>Eukaryota</taxon>
        <taxon>Metazoa</taxon>
        <taxon>Chordata</taxon>
        <taxon>Craniata</taxon>
        <taxon>Vertebrata</taxon>
        <taxon>Euteleostomi</taxon>
        <taxon>Archelosauria</taxon>
        <taxon>Archosauria</taxon>
        <taxon>Crocodylia</taxon>
        <taxon>Alligatoridae</taxon>
        <taxon>Alligatorinae</taxon>
        <taxon>Alligator</taxon>
    </lineage>
</organism>
<dbReference type="EC" id="1.1.1.1"/>
<dbReference type="PIR" id="S35669">
    <property type="entry name" value="S35669"/>
</dbReference>
<dbReference type="SMR" id="P80222"/>
<dbReference type="iPTMnet" id="P80222"/>
<dbReference type="eggNOG" id="KOG0022">
    <property type="taxonomic scope" value="Eukaryota"/>
</dbReference>
<dbReference type="GO" id="GO:0005829">
    <property type="term" value="C:cytosol"/>
    <property type="evidence" value="ECO:0007669"/>
    <property type="project" value="TreeGrafter"/>
</dbReference>
<dbReference type="GO" id="GO:0004745">
    <property type="term" value="F:all-trans-retinol dehydrogenase (NAD+) activity"/>
    <property type="evidence" value="ECO:0007669"/>
    <property type="project" value="TreeGrafter"/>
</dbReference>
<dbReference type="GO" id="GO:0008270">
    <property type="term" value="F:zinc ion binding"/>
    <property type="evidence" value="ECO:0007669"/>
    <property type="project" value="InterPro"/>
</dbReference>
<dbReference type="GO" id="GO:0042573">
    <property type="term" value="P:retinoic acid metabolic process"/>
    <property type="evidence" value="ECO:0007669"/>
    <property type="project" value="TreeGrafter"/>
</dbReference>
<dbReference type="GO" id="GO:0042572">
    <property type="term" value="P:retinol metabolic process"/>
    <property type="evidence" value="ECO:0007669"/>
    <property type="project" value="TreeGrafter"/>
</dbReference>
<dbReference type="CDD" id="cd08299">
    <property type="entry name" value="alcohol_DH_class_I_II_IV"/>
    <property type="match status" value="1"/>
</dbReference>
<dbReference type="FunFam" id="3.40.50.720:FF:000003">
    <property type="entry name" value="S-(hydroxymethyl)glutathione dehydrogenase"/>
    <property type="match status" value="1"/>
</dbReference>
<dbReference type="FunFam" id="3.90.180.10:FF:000001">
    <property type="entry name" value="S-(hydroxymethyl)glutathione dehydrogenase"/>
    <property type="match status" value="1"/>
</dbReference>
<dbReference type="Gene3D" id="3.90.180.10">
    <property type="entry name" value="Medium-chain alcohol dehydrogenases, catalytic domain"/>
    <property type="match status" value="1"/>
</dbReference>
<dbReference type="Gene3D" id="3.40.50.720">
    <property type="entry name" value="NAD(P)-binding Rossmann-like Domain"/>
    <property type="match status" value="1"/>
</dbReference>
<dbReference type="InterPro" id="IPR013149">
    <property type="entry name" value="ADH-like_C"/>
</dbReference>
<dbReference type="InterPro" id="IPR013154">
    <property type="entry name" value="ADH-like_N"/>
</dbReference>
<dbReference type="InterPro" id="IPR002328">
    <property type="entry name" value="ADH_Zn_CS"/>
</dbReference>
<dbReference type="InterPro" id="IPR011032">
    <property type="entry name" value="GroES-like_sf"/>
</dbReference>
<dbReference type="InterPro" id="IPR036291">
    <property type="entry name" value="NAD(P)-bd_dom_sf"/>
</dbReference>
<dbReference type="InterPro" id="IPR020843">
    <property type="entry name" value="PKS_ER"/>
</dbReference>
<dbReference type="PANTHER" id="PTHR43880">
    <property type="entry name" value="ALCOHOL DEHYDROGENASE"/>
    <property type="match status" value="1"/>
</dbReference>
<dbReference type="PANTHER" id="PTHR43880:SF1">
    <property type="entry name" value="ALCOHOL DEHYDROGENASE 1A"/>
    <property type="match status" value="1"/>
</dbReference>
<dbReference type="Pfam" id="PF08240">
    <property type="entry name" value="ADH_N"/>
    <property type="match status" value="1"/>
</dbReference>
<dbReference type="Pfam" id="PF00107">
    <property type="entry name" value="ADH_zinc_N"/>
    <property type="match status" value="1"/>
</dbReference>
<dbReference type="SMART" id="SM00829">
    <property type="entry name" value="PKS_ER"/>
    <property type="match status" value="1"/>
</dbReference>
<dbReference type="SUPFAM" id="SSF50129">
    <property type="entry name" value="GroES-like"/>
    <property type="match status" value="2"/>
</dbReference>
<dbReference type="SUPFAM" id="SSF51735">
    <property type="entry name" value="NAD(P)-binding Rossmann-fold domains"/>
    <property type="match status" value="1"/>
</dbReference>
<dbReference type="PROSITE" id="PS00059">
    <property type="entry name" value="ADH_ZINC"/>
    <property type="match status" value="1"/>
</dbReference>
<sequence length="374" mass="39670">STAGKVIKCKAAITWEIKKPFSIEEIEVAPPKAHEVRIKILATGICRSDDHVTAGLLTMPLPMILGHEAAGVVESTGEGVTSLKPGDKVIPLFVPQCGECMPCLKSNGNLCIRNDLGSPSGLMADGTSRFTCKGKDIHHFIGTSTFTEYTVVHETAVARIDAAAPLEKVCLIGCGFSTGYGAAVKDAKVEPGSTCAVFGLGGVGLSTIMGCKAAGASRIIGIDINKDKFAKAKELGATECINPLDCKKPIQEVLSEMTGGGVDYSFEVIGRIDTMTAALACCQDNYGTSVIVGVPPASEKITFNPMMLFTGRTWKGSVFGGWKSKESVPKLVADYMEKKINLDGLITHTLPFDKINEGFELLRTGKSIRSVLTF</sequence>
<name>ADH1_ALLMI</name>
<proteinExistence type="evidence at protein level"/>
<feature type="chain" id="PRO_0000160675" description="Alcohol dehydrogenase 1">
    <location>
        <begin position="1"/>
        <end position="374"/>
    </location>
</feature>
<feature type="binding site" evidence="1">
    <location>
        <position position="46"/>
    </location>
    <ligand>
        <name>Zn(2+)</name>
        <dbReference type="ChEBI" id="CHEBI:29105"/>
        <label>1</label>
        <note>catalytic</note>
    </ligand>
</feature>
<feature type="binding site" evidence="1">
    <location>
        <position position="67"/>
    </location>
    <ligand>
        <name>Zn(2+)</name>
        <dbReference type="ChEBI" id="CHEBI:29105"/>
        <label>1</label>
        <note>catalytic</note>
    </ligand>
</feature>
<feature type="binding site" evidence="1">
    <location>
        <position position="97"/>
    </location>
    <ligand>
        <name>Zn(2+)</name>
        <dbReference type="ChEBI" id="CHEBI:29105"/>
        <label>2</label>
    </ligand>
</feature>
<feature type="binding site" evidence="1">
    <location>
        <position position="100"/>
    </location>
    <ligand>
        <name>Zn(2+)</name>
        <dbReference type="ChEBI" id="CHEBI:29105"/>
        <label>2</label>
    </ligand>
</feature>
<feature type="binding site" evidence="1">
    <location>
        <position position="103"/>
    </location>
    <ligand>
        <name>Zn(2+)</name>
        <dbReference type="ChEBI" id="CHEBI:29105"/>
        <label>2</label>
    </ligand>
</feature>
<feature type="binding site" evidence="1">
    <location>
        <position position="111"/>
    </location>
    <ligand>
        <name>Zn(2+)</name>
        <dbReference type="ChEBI" id="CHEBI:29105"/>
        <label>2</label>
    </ligand>
</feature>
<feature type="binding site" evidence="1">
    <location>
        <position position="174"/>
    </location>
    <ligand>
        <name>Zn(2+)</name>
        <dbReference type="ChEBI" id="CHEBI:29105"/>
        <label>1</label>
        <note>catalytic</note>
    </ligand>
</feature>
<feature type="binding site" evidence="1">
    <location>
        <begin position="199"/>
        <end position="204"/>
    </location>
    <ligand>
        <name>NAD(+)</name>
        <dbReference type="ChEBI" id="CHEBI:57540"/>
    </ligand>
</feature>
<feature type="binding site" evidence="1">
    <location>
        <position position="223"/>
    </location>
    <ligand>
        <name>NAD(+)</name>
        <dbReference type="ChEBI" id="CHEBI:57540"/>
    </ligand>
</feature>
<feature type="binding site" evidence="1">
    <location>
        <position position="228"/>
    </location>
    <ligand>
        <name>NAD(+)</name>
        <dbReference type="ChEBI" id="CHEBI:57540"/>
    </ligand>
</feature>
<feature type="binding site" evidence="1">
    <location>
        <begin position="292"/>
        <end position="294"/>
    </location>
    <ligand>
        <name>NAD(+)</name>
        <dbReference type="ChEBI" id="CHEBI:57540"/>
    </ligand>
</feature>
<feature type="binding site" evidence="1">
    <location>
        <position position="369"/>
    </location>
    <ligand>
        <name>NAD(+)</name>
        <dbReference type="ChEBI" id="CHEBI:57540"/>
    </ligand>
</feature>
<feature type="modified residue" description="N-acetylserine" evidence="2">
    <location>
        <position position="1"/>
    </location>
</feature>
<feature type="sequence variant">
    <original>D</original>
    <variation>T</variation>
    <location>
        <position position="186"/>
    </location>
</feature>
<feature type="sequence variant">
    <original>S</original>
    <variation>T</variation>
    <location>
        <position position="317"/>
    </location>
</feature>
<comment type="catalytic activity">
    <reaction>
        <text>a primary alcohol + NAD(+) = an aldehyde + NADH + H(+)</text>
        <dbReference type="Rhea" id="RHEA:10736"/>
        <dbReference type="ChEBI" id="CHEBI:15378"/>
        <dbReference type="ChEBI" id="CHEBI:15734"/>
        <dbReference type="ChEBI" id="CHEBI:17478"/>
        <dbReference type="ChEBI" id="CHEBI:57540"/>
        <dbReference type="ChEBI" id="CHEBI:57945"/>
        <dbReference type="EC" id="1.1.1.1"/>
    </reaction>
</comment>
<comment type="catalytic activity">
    <reaction>
        <text>a secondary alcohol + NAD(+) = a ketone + NADH + H(+)</text>
        <dbReference type="Rhea" id="RHEA:10740"/>
        <dbReference type="ChEBI" id="CHEBI:15378"/>
        <dbReference type="ChEBI" id="CHEBI:17087"/>
        <dbReference type="ChEBI" id="CHEBI:35681"/>
        <dbReference type="ChEBI" id="CHEBI:57540"/>
        <dbReference type="ChEBI" id="CHEBI:57945"/>
        <dbReference type="EC" id="1.1.1.1"/>
    </reaction>
</comment>
<comment type="cofactor">
    <cofactor evidence="1">
        <name>Zn(2+)</name>
        <dbReference type="ChEBI" id="CHEBI:29105"/>
    </cofactor>
    <text evidence="1">Binds 2 Zn(2+) ions per subunit.</text>
</comment>
<comment type="subcellular location">
    <subcellularLocation>
        <location>Cytoplasm</location>
    </subcellularLocation>
</comment>
<comment type="similarity">
    <text evidence="3">Belongs to the zinc-containing alcohol dehydrogenase family. Class-I subfamily.</text>
</comment>
<keyword id="KW-0007">Acetylation</keyword>
<keyword id="KW-0963">Cytoplasm</keyword>
<keyword id="KW-0903">Direct protein sequencing</keyword>
<keyword id="KW-0479">Metal-binding</keyword>
<keyword id="KW-0520">NAD</keyword>
<keyword id="KW-0560">Oxidoreductase</keyword>
<keyword id="KW-0862">Zinc</keyword>
<accession>P80222</accession>